<evidence type="ECO:0000255" key="1">
    <source>
        <dbReference type="HAMAP-Rule" id="MF_01368"/>
    </source>
</evidence>
<evidence type="ECO:0000305" key="2"/>
<comment type="subunit">
    <text evidence="1">Part of the 50S ribosomal subunit. Contacts protein L32.</text>
</comment>
<comment type="similarity">
    <text evidence="1">Belongs to the bacterial ribosomal protein bL17 family.</text>
</comment>
<gene>
    <name evidence="1" type="primary">rplQ</name>
    <name type="ordered locus">BP3643</name>
</gene>
<accession>Q7VTA6</accession>
<reference key="1">
    <citation type="journal article" date="2003" name="Nat. Genet.">
        <title>Comparative analysis of the genome sequences of Bordetella pertussis, Bordetella parapertussis and Bordetella bronchiseptica.</title>
        <authorList>
            <person name="Parkhill J."/>
            <person name="Sebaihia M."/>
            <person name="Preston A."/>
            <person name="Murphy L.D."/>
            <person name="Thomson N.R."/>
            <person name="Harris D.E."/>
            <person name="Holden M.T.G."/>
            <person name="Churcher C.M."/>
            <person name="Bentley S.D."/>
            <person name="Mungall K.L."/>
            <person name="Cerdeno-Tarraga A.-M."/>
            <person name="Temple L."/>
            <person name="James K.D."/>
            <person name="Harris B."/>
            <person name="Quail M.A."/>
            <person name="Achtman M."/>
            <person name="Atkin R."/>
            <person name="Baker S."/>
            <person name="Basham D."/>
            <person name="Bason N."/>
            <person name="Cherevach I."/>
            <person name="Chillingworth T."/>
            <person name="Collins M."/>
            <person name="Cronin A."/>
            <person name="Davis P."/>
            <person name="Doggett J."/>
            <person name="Feltwell T."/>
            <person name="Goble A."/>
            <person name="Hamlin N."/>
            <person name="Hauser H."/>
            <person name="Holroyd S."/>
            <person name="Jagels K."/>
            <person name="Leather S."/>
            <person name="Moule S."/>
            <person name="Norberczak H."/>
            <person name="O'Neil S."/>
            <person name="Ormond D."/>
            <person name="Price C."/>
            <person name="Rabbinowitsch E."/>
            <person name="Rutter S."/>
            <person name="Sanders M."/>
            <person name="Saunders D."/>
            <person name="Seeger K."/>
            <person name="Sharp S."/>
            <person name="Simmonds M."/>
            <person name="Skelton J."/>
            <person name="Squares R."/>
            <person name="Squares S."/>
            <person name="Stevens K."/>
            <person name="Unwin L."/>
            <person name="Whitehead S."/>
            <person name="Barrell B.G."/>
            <person name="Maskell D.J."/>
        </authorList>
    </citation>
    <scope>NUCLEOTIDE SEQUENCE [LARGE SCALE GENOMIC DNA]</scope>
    <source>
        <strain>Tohama I / ATCC BAA-589 / NCTC 13251</strain>
    </source>
</reference>
<keyword id="KW-1185">Reference proteome</keyword>
<keyword id="KW-0687">Ribonucleoprotein</keyword>
<keyword id="KW-0689">Ribosomal protein</keyword>
<dbReference type="EMBL" id="BX640422">
    <property type="protein sequence ID" value="CAE43900.1"/>
    <property type="molecule type" value="Genomic_DNA"/>
</dbReference>
<dbReference type="RefSeq" id="NP_882152.1">
    <property type="nucleotide sequence ID" value="NC_002929.2"/>
</dbReference>
<dbReference type="RefSeq" id="WP_003806934.1">
    <property type="nucleotide sequence ID" value="NZ_CP039022.1"/>
</dbReference>
<dbReference type="SMR" id="Q7VTA6"/>
<dbReference type="STRING" id="257313.BP3643"/>
<dbReference type="PaxDb" id="257313-BP3643"/>
<dbReference type="GeneID" id="69600129"/>
<dbReference type="KEGG" id="bpe:BP3643"/>
<dbReference type="PATRIC" id="fig|257313.5.peg.3940"/>
<dbReference type="eggNOG" id="COG0203">
    <property type="taxonomic scope" value="Bacteria"/>
</dbReference>
<dbReference type="HOGENOM" id="CLU_074407_2_0_4"/>
<dbReference type="Proteomes" id="UP000002676">
    <property type="component" value="Chromosome"/>
</dbReference>
<dbReference type="GO" id="GO:0022625">
    <property type="term" value="C:cytosolic large ribosomal subunit"/>
    <property type="evidence" value="ECO:0007669"/>
    <property type="project" value="TreeGrafter"/>
</dbReference>
<dbReference type="GO" id="GO:0003735">
    <property type="term" value="F:structural constituent of ribosome"/>
    <property type="evidence" value="ECO:0007669"/>
    <property type="project" value="InterPro"/>
</dbReference>
<dbReference type="GO" id="GO:0006412">
    <property type="term" value="P:translation"/>
    <property type="evidence" value="ECO:0007669"/>
    <property type="project" value="UniProtKB-UniRule"/>
</dbReference>
<dbReference type="FunFam" id="3.90.1030.10:FF:000001">
    <property type="entry name" value="50S ribosomal protein L17"/>
    <property type="match status" value="1"/>
</dbReference>
<dbReference type="Gene3D" id="3.90.1030.10">
    <property type="entry name" value="Ribosomal protein L17"/>
    <property type="match status" value="1"/>
</dbReference>
<dbReference type="HAMAP" id="MF_01368">
    <property type="entry name" value="Ribosomal_bL17"/>
    <property type="match status" value="1"/>
</dbReference>
<dbReference type="InterPro" id="IPR000456">
    <property type="entry name" value="Ribosomal_bL17"/>
</dbReference>
<dbReference type="InterPro" id="IPR047859">
    <property type="entry name" value="Ribosomal_bL17_CS"/>
</dbReference>
<dbReference type="InterPro" id="IPR036373">
    <property type="entry name" value="Ribosomal_bL17_sf"/>
</dbReference>
<dbReference type="NCBIfam" id="TIGR00059">
    <property type="entry name" value="L17"/>
    <property type="match status" value="1"/>
</dbReference>
<dbReference type="PANTHER" id="PTHR14413:SF16">
    <property type="entry name" value="LARGE RIBOSOMAL SUBUNIT PROTEIN BL17M"/>
    <property type="match status" value="1"/>
</dbReference>
<dbReference type="PANTHER" id="PTHR14413">
    <property type="entry name" value="RIBOSOMAL PROTEIN L17"/>
    <property type="match status" value="1"/>
</dbReference>
<dbReference type="Pfam" id="PF01196">
    <property type="entry name" value="Ribosomal_L17"/>
    <property type="match status" value="1"/>
</dbReference>
<dbReference type="SUPFAM" id="SSF64263">
    <property type="entry name" value="Prokaryotic ribosomal protein L17"/>
    <property type="match status" value="1"/>
</dbReference>
<dbReference type="PROSITE" id="PS01167">
    <property type="entry name" value="RIBOSOMAL_L17"/>
    <property type="match status" value="1"/>
</dbReference>
<feature type="chain" id="PRO_0000267837" description="Large ribosomal subunit protein bL17">
    <location>
        <begin position="1"/>
        <end position="131"/>
    </location>
</feature>
<sequence>MRHGNGLRKLNRTSSHRLAMFRNMAVSLITHEAIKTTLPKAKELRRVIEPLITLGKEPTLANKRLAFARLRDRDAVVKLFAEIGPRYANRNGGYTRVLKMGFRQGDNAPMAFMELVDRPEVDASEADSDAE</sequence>
<organism>
    <name type="scientific">Bordetella pertussis (strain Tohama I / ATCC BAA-589 / NCTC 13251)</name>
    <dbReference type="NCBI Taxonomy" id="257313"/>
    <lineage>
        <taxon>Bacteria</taxon>
        <taxon>Pseudomonadati</taxon>
        <taxon>Pseudomonadota</taxon>
        <taxon>Betaproteobacteria</taxon>
        <taxon>Burkholderiales</taxon>
        <taxon>Alcaligenaceae</taxon>
        <taxon>Bordetella</taxon>
    </lineage>
</organism>
<proteinExistence type="inferred from homology"/>
<name>RL17_BORPE</name>
<protein>
    <recommendedName>
        <fullName evidence="1">Large ribosomal subunit protein bL17</fullName>
    </recommendedName>
    <alternativeName>
        <fullName evidence="2">50S ribosomal protein L17</fullName>
    </alternativeName>
</protein>